<reference key="1">
    <citation type="journal article" date="1998" name="Science">
        <title>Complete genome sequence of Treponema pallidum, the syphilis spirochete.</title>
        <authorList>
            <person name="Fraser C.M."/>
            <person name="Norris S.J."/>
            <person name="Weinstock G.M."/>
            <person name="White O."/>
            <person name="Sutton G.G."/>
            <person name="Dodson R.J."/>
            <person name="Gwinn M.L."/>
            <person name="Hickey E.K."/>
            <person name="Clayton R.A."/>
            <person name="Ketchum K.A."/>
            <person name="Sodergren E."/>
            <person name="Hardham J.M."/>
            <person name="McLeod M.P."/>
            <person name="Salzberg S.L."/>
            <person name="Peterson J.D."/>
            <person name="Khalak H.G."/>
            <person name="Richardson D.L."/>
            <person name="Howell J.K."/>
            <person name="Chidambaram M."/>
            <person name="Utterback T.R."/>
            <person name="McDonald L.A."/>
            <person name="Artiach P."/>
            <person name="Bowman C."/>
            <person name="Cotton M.D."/>
            <person name="Fujii C."/>
            <person name="Garland S.A."/>
            <person name="Hatch B."/>
            <person name="Horst K."/>
            <person name="Roberts K.M."/>
            <person name="Sandusky M."/>
            <person name="Weidman J.F."/>
            <person name="Smith H.O."/>
            <person name="Venter J.C."/>
        </authorList>
    </citation>
    <scope>NUCLEOTIDE SEQUENCE [LARGE SCALE GENOMIC DNA]</scope>
    <source>
        <strain>Nichols</strain>
    </source>
</reference>
<proteinExistence type="predicted"/>
<accession>O83465</accession>
<organism>
    <name type="scientific">Treponema pallidum (strain Nichols)</name>
    <dbReference type="NCBI Taxonomy" id="243276"/>
    <lineage>
        <taxon>Bacteria</taxon>
        <taxon>Pseudomonadati</taxon>
        <taxon>Spirochaetota</taxon>
        <taxon>Spirochaetia</taxon>
        <taxon>Spirochaetales</taxon>
        <taxon>Treponemataceae</taxon>
        <taxon>Treponema</taxon>
    </lineage>
</organism>
<name>Y451_TREPA</name>
<feature type="chain" id="PRO_0000202256" description="Uncharacterized protein TP_0451">
    <location>
        <begin position="1"/>
        <end position="60"/>
    </location>
</feature>
<gene>
    <name type="ordered locus">TP_0451</name>
</gene>
<protein>
    <recommendedName>
        <fullName>Uncharacterized protein TP_0451</fullName>
    </recommendedName>
</protein>
<dbReference type="EMBL" id="AE000520">
    <property type="protein sequence ID" value="AAC65442.1"/>
    <property type="molecule type" value="Genomic_DNA"/>
</dbReference>
<dbReference type="PIR" id="D71322">
    <property type="entry name" value="D71322"/>
</dbReference>
<dbReference type="RefSeq" id="WP_010881899.1">
    <property type="nucleotide sequence ID" value="NC_021490.2"/>
</dbReference>
<dbReference type="IntAct" id="O83465">
    <property type="interactions" value="7"/>
</dbReference>
<dbReference type="STRING" id="243276.TP_0451"/>
<dbReference type="EnsemblBacteria" id="AAC65442">
    <property type="protein sequence ID" value="AAC65442"/>
    <property type="gene ID" value="TP_0451"/>
</dbReference>
<dbReference type="KEGG" id="tpa:TP_0451"/>
<dbReference type="KEGG" id="tpw:TPANIC_0451"/>
<dbReference type="HOGENOM" id="CLU_209906_0_0_12"/>
<dbReference type="Proteomes" id="UP000000811">
    <property type="component" value="Chromosome"/>
</dbReference>
<sequence length="60" mass="6625">MLSMQLVTVTVQGAMVADIAVAVRTAPHPFLYASVLQDSPQARKPVRETRYQKMSAFLCT</sequence>
<keyword id="KW-1185">Reference proteome</keyword>